<comment type="function">
    <text evidence="1">Converts cobyric acid to cobinamide by the addition of aminopropanol on the F carboxylic group.</text>
</comment>
<comment type="pathway">
    <text evidence="1">Cofactor biosynthesis; adenosylcobalamin biosynthesis.</text>
</comment>
<comment type="subcellular location">
    <subcellularLocation>
        <location evidence="1">Cell membrane</location>
        <topology evidence="1">Multi-pass membrane protein</topology>
    </subcellularLocation>
</comment>
<comment type="similarity">
    <text evidence="1">Belongs to the CobD/CbiB family.</text>
</comment>
<organism>
    <name type="scientific">Listeria monocytogenes serovar 1/2a (strain ATCC BAA-679 / EGD-e)</name>
    <dbReference type="NCBI Taxonomy" id="169963"/>
    <lineage>
        <taxon>Bacteria</taxon>
        <taxon>Bacillati</taxon>
        <taxon>Bacillota</taxon>
        <taxon>Bacilli</taxon>
        <taxon>Bacillales</taxon>
        <taxon>Listeriaceae</taxon>
        <taxon>Listeria</taxon>
    </lineage>
</organism>
<reference key="1">
    <citation type="journal article" date="2001" name="Science">
        <title>Comparative genomics of Listeria species.</title>
        <authorList>
            <person name="Glaser P."/>
            <person name="Frangeul L."/>
            <person name="Buchrieser C."/>
            <person name="Rusniok C."/>
            <person name="Amend A."/>
            <person name="Baquero F."/>
            <person name="Berche P."/>
            <person name="Bloecker H."/>
            <person name="Brandt P."/>
            <person name="Chakraborty T."/>
            <person name="Charbit A."/>
            <person name="Chetouani F."/>
            <person name="Couve E."/>
            <person name="de Daruvar A."/>
            <person name="Dehoux P."/>
            <person name="Domann E."/>
            <person name="Dominguez-Bernal G."/>
            <person name="Duchaud E."/>
            <person name="Durant L."/>
            <person name="Dussurget O."/>
            <person name="Entian K.-D."/>
            <person name="Fsihi H."/>
            <person name="Garcia-del Portillo F."/>
            <person name="Garrido P."/>
            <person name="Gautier L."/>
            <person name="Goebel W."/>
            <person name="Gomez-Lopez N."/>
            <person name="Hain T."/>
            <person name="Hauf J."/>
            <person name="Jackson D."/>
            <person name="Jones L.-M."/>
            <person name="Kaerst U."/>
            <person name="Kreft J."/>
            <person name="Kuhn M."/>
            <person name="Kunst F."/>
            <person name="Kurapkat G."/>
            <person name="Madueno E."/>
            <person name="Maitournam A."/>
            <person name="Mata Vicente J."/>
            <person name="Ng E."/>
            <person name="Nedjari H."/>
            <person name="Nordsiek G."/>
            <person name="Novella S."/>
            <person name="de Pablos B."/>
            <person name="Perez-Diaz J.-C."/>
            <person name="Purcell R."/>
            <person name="Remmel B."/>
            <person name="Rose M."/>
            <person name="Schlueter T."/>
            <person name="Simoes N."/>
            <person name="Tierrez A."/>
            <person name="Vazquez-Boland J.-A."/>
            <person name="Voss H."/>
            <person name="Wehland J."/>
            <person name="Cossart P."/>
        </authorList>
    </citation>
    <scope>NUCLEOTIDE SEQUENCE [LARGE SCALE GENOMIC DNA]</scope>
    <source>
        <strain>ATCC BAA-679 / EGD-e</strain>
    </source>
</reference>
<protein>
    <recommendedName>
        <fullName evidence="1">Cobalamin biosynthesis protein CobD</fullName>
    </recommendedName>
</protein>
<dbReference type="EMBL" id="AL591978">
    <property type="protein sequence ID" value="CAC99270.1"/>
    <property type="molecule type" value="Genomic_DNA"/>
</dbReference>
<dbReference type="PIR" id="AH1223">
    <property type="entry name" value="AH1223"/>
</dbReference>
<dbReference type="RefSeq" id="NP_464717.1">
    <property type="nucleotide sequence ID" value="NC_003210.1"/>
</dbReference>
<dbReference type="STRING" id="169963.gene:17593848"/>
<dbReference type="PaxDb" id="169963-lmo1192"/>
<dbReference type="EnsemblBacteria" id="CAC99270">
    <property type="protein sequence ID" value="CAC99270"/>
    <property type="gene ID" value="CAC99270"/>
</dbReference>
<dbReference type="GeneID" id="986098"/>
<dbReference type="KEGG" id="lmo:lmo1192"/>
<dbReference type="PATRIC" id="fig|169963.11.peg.1223"/>
<dbReference type="eggNOG" id="COG1270">
    <property type="taxonomic scope" value="Bacteria"/>
</dbReference>
<dbReference type="HOGENOM" id="CLU_054212_0_0_9"/>
<dbReference type="OrthoDB" id="9811967at2"/>
<dbReference type="PhylomeDB" id="Q8Y7S9"/>
<dbReference type="BioCyc" id="LMON169963:LMO1192-MONOMER"/>
<dbReference type="UniPathway" id="UPA00148"/>
<dbReference type="Proteomes" id="UP000000817">
    <property type="component" value="Chromosome"/>
</dbReference>
<dbReference type="GO" id="GO:0005886">
    <property type="term" value="C:plasma membrane"/>
    <property type="evidence" value="ECO:0007669"/>
    <property type="project" value="UniProtKB-SubCell"/>
</dbReference>
<dbReference type="GO" id="GO:0015420">
    <property type="term" value="F:ABC-type vitamin B12 transporter activity"/>
    <property type="evidence" value="ECO:0007669"/>
    <property type="project" value="UniProtKB-UniRule"/>
</dbReference>
<dbReference type="GO" id="GO:0048472">
    <property type="term" value="F:threonine-phosphate decarboxylase activity"/>
    <property type="evidence" value="ECO:0007669"/>
    <property type="project" value="InterPro"/>
</dbReference>
<dbReference type="GO" id="GO:0009236">
    <property type="term" value="P:cobalamin biosynthetic process"/>
    <property type="evidence" value="ECO:0007669"/>
    <property type="project" value="UniProtKB-UniRule"/>
</dbReference>
<dbReference type="HAMAP" id="MF_00024">
    <property type="entry name" value="CobD_CbiB"/>
    <property type="match status" value="1"/>
</dbReference>
<dbReference type="InterPro" id="IPR004485">
    <property type="entry name" value="Cobalamin_biosynth_CobD/CbiB"/>
</dbReference>
<dbReference type="NCBIfam" id="TIGR00380">
    <property type="entry name" value="cobal_cbiB"/>
    <property type="match status" value="1"/>
</dbReference>
<dbReference type="PANTHER" id="PTHR34308">
    <property type="entry name" value="COBALAMIN BIOSYNTHESIS PROTEIN CBIB"/>
    <property type="match status" value="1"/>
</dbReference>
<dbReference type="PANTHER" id="PTHR34308:SF1">
    <property type="entry name" value="COBALAMIN BIOSYNTHESIS PROTEIN CBIB"/>
    <property type="match status" value="1"/>
</dbReference>
<dbReference type="Pfam" id="PF03186">
    <property type="entry name" value="CobD_Cbib"/>
    <property type="match status" value="1"/>
</dbReference>
<feature type="chain" id="PRO_0000150931" description="Cobalamin biosynthesis protein CobD">
    <location>
        <begin position="1"/>
        <end position="315"/>
    </location>
</feature>
<feature type="transmembrane region" description="Helical" evidence="1">
    <location>
        <begin position="54"/>
        <end position="74"/>
    </location>
</feature>
<feature type="transmembrane region" description="Helical" evidence="1">
    <location>
        <begin position="78"/>
        <end position="98"/>
    </location>
</feature>
<feature type="transmembrane region" description="Helical" evidence="1">
    <location>
        <begin position="152"/>
        <end position="172"/>
    </location>
</feature>
<feature type="transmembrane region" description="Helical" evidence="1">
    <location>
        <begin position="203"/>
        <end position="223"/>
    </location>
</feature>
<feature type="transmembrane region" description="Helical" evidence="1">
    <location>
        <begin position="295"/>
        <end position="315"/>
    </location>
</feature>
<sequence length="315" mass="34755">MILLFYTSSFILDCLLGDPYSWPHPIKAIGNLIKWLTIILRKIFHGKSLYFAGGLLFVLTVGMTGAVSWFILFLSAKIAYWLYVAVFVYLGYTTLAMTCLAKEARKIQRTLADGDLAAARVQVGMIVGRDTDKLTAEEISKATIETVAENTADGVIAPLFYLFIGGPVLALMYKAVNTLDSMVGYKNEKYRAIGFVSAKMDDIANFIPARLAWFFLVIASFILRYDGRASWQIGLRDRKNHTSPNCAYPEGAVAGALGITLGGTHEYFGETVVKPTIGSGTKPVSEKEISQTIHLLYMASTIAFIMFASIYLLLF</sequence>
<accession>Q8Y7S9</accession>
<evidence type="ECO:0000255" key="1">
    <source>
        <dbReference type="HAMAP-Rule" id="MF_00024"/>
    </source>
</evidence>
<keyword id="KW-1003">Cell membrane</keyword>
<keyword id="KW-0169">Cobalamin biosynthesis</keyword>
<keyword id="KW-0472">Membrane</keyword>
<keyword id="KW-1185">Reference proteome</keyword>
<keyword id="KW-0812">Transmembrane</keyword>
<keyword id="KW-1133">Transmembrane helix</keyword>
<gene>
    <name evidence="1" type="primary">cobD</name>
    <name type="ordered locus">lmo1192</name>
</gene>
<proteinExistence type="inferred from homology"/>
<name>COBD_LISMO</name>